<comment type="function">
    <text evidence="2">The pigment-dispersing hormone causes the migration of the distal retinal pigment into the proximal end of the pigment chromatophore cells and thus decreases the amount of light entering the retinulas. May also function as a neurotransmitter and/or neuromodulator (By similarity).</text>
</comment>
<comment type="subcellular location">
    <subcellularLocation>
        <location evidence="2">Secreted</location>
    </subcellularLocation>
</comment>
<comment type="tissue specificity">
    <text evidence="4">Expressed strongly in the head and weakly in the ventral nerve cord. Not detected in the midgut cecum or hindgut. In the cephalic neural complex, specifically localized to cells within the optic lobe, anteromedian protocerebrum, accessory lobe, tritocerebrum, and subesophageal ganglion.</text>
</comment>
<comment type="similarity">
    <text evidence="3">Belongs to the arthropod PDH family.</text>
</comment>
<keyword id="KW-0027">Amidation</keyword>
<keyword id="KW-0165">Cleavage on pair of basic residues</keyword>
<keyword id="KW-0372">Hormone</keyword>
<keyword id="KW-0529">Neurotransmitter</keyword>
<keyword id="KW-0964">Secreted</keyword>
<keyword id="KW-0732">Signal</keyword>
<protein>
    <recommendedName>
        <fullName evidence="2">Pigment-dispersing hormone peptides</fullName>
        <shortName evidence="5">AvPDH</shortName>
    </recommendedName>
    <component>
        <recommendedName>
            <fullName evidence="5">PDH precursor-related peptide</fullName>
            <shortName evidence="5">PPRP</shortName>
        </recommendedName>
    </component>
    <component>
        <recommendedName>
            <fullName evidence="5">Pigment-dispersing hormone</fullName>
            <shortName evidence="5">PDH</shortName>
        </recommendedName>
    </component>
</protein>
<name>PDH_ARMVU</name>
<dbReference type="EMBL" id="AB543253">
    <property type="protein sequence ID" value="BAI67599.1"/>
    <property type="molecule type" value="mRNA"/>
</dbReference>
<dbReference type="SMR" id="D2Z1D6"/>
<dbReference type="OrthoDB" id="6378554at2759"/>
<dbReference type="GO" id="GO:0005576">
    <property type="term" value="C:extracellular region"/>
    <property type="evidence" value="ECO:0007669"/>
    <property type="project" value="UniProtKB-SubCell"/>
</dbReference>
<dbReference type="GO" id="GO:0045202">
    <property type="term" value="C:synapse"/>
    <property type="evidence" value="ECO:0007669"/>
    <property type="project" value="GOC"/>
</dbReference>
<dbReference type="GO" id="GO:0005179">
    <property type="term" value="F:hormone activity"/>
    <property type="evidence" value="ECO:0007669"/>
    <property type="project" value="UniProtKB-KW"/>
</dbReference>
<dbReference type="GO" id="GO:0007268">
    <property type="term" value="P:chemical synaptic transmission"/>
    <property type="evidence" value="ECO:0007669"/>
    <property type="project" value="UniProtKB-KW"/>
</dbReference>
<dbReference type="GO" id="GO:0009416">
    <property type="term" value="P:response to light stimulus"/>
    <property type="evidence" value="ECO:0007669"/>
    <property type="project" value="InterPro"/>
</dbReference>
<dbReference type="InterPro" id="IPR009396">
    <property type="entry name" value="Pigment_DH"/>
</dbReference>
<dbReference type="Pfam" id="PF06324">
    <property type="entry name" value="Pigment_DH"/>
    <property type="match status" value="1"/>
</dbReference>
<evidence type="ECO:0000250" key="1">
    <source>
        <dbReference type="UniProtKB" id="D2IT41"/>
    </source>
</evidence>
<evidence type="ECO:0000250" key="2">
    <source>
        <dbReference type="UniProtKB" id="P08871"/>
    </source>
</evidence>
<evidence type="ECO:0000255" key="3"/>
<evidence type="ECO:0000269" key="4">
    <source>
    </source>
</evidence>
<evidence type="ECO:0000303" key="5">
    <source>
    </source>
</evidence>
<evidence type="ECO:0000305" key="6"/>
<evidence type="ECO:0000312" key="7">
    <source>
        <dbReference type="EMBL" id="BAI67599.1"/>
    </source>
</evidence>
<accession>D2Z1D6</accession>
<sequence>MIGKYLSWFMLAFLFGFVLESYRVQSQDLNPTEKEVLSNMLDFLQRHSRTTYMFPLLSESKRNSELINSLLGAPRVLNNAGR</sequence>
<feature type="signal peptide" evidence="3">
    <location>
        <begin position="1"/>
        <end position="26"/>
    </location>
</feature>
<feature type="peptide" id="PRO_0000423517" description="PDH precursor-related peptide" evidence="3">
    <location>
        <begin position="27"/>
        <end position="60"/>
    </location>
</feature>
<feature type="peptide" id="PRO_0000423518" description="Pigment-dispersing hormone" evidence="1">
    <location>
        <begin position="63"/>
        <end position="80"/>
    </location>
</feature>
<feature type="modified residue" description="Alanine amide" evidence="2">
    <location>
        <position position="80"/>
    </location>
</feature>
<proteinExistence type="evidence at transcript level"/>
<reference evidence="6 7" key="1">
    <citation type="journal article" date="2010" name="J. Insect Physiol.">
        <title>Precursor structure, distribution and possible functions of pigment-dispersing hormone (PDH) in the terrestrial isopod Armadillidium vulgare (Latreille).</title>
        <authorList>
            <person name="Fouda M.M.A."/>
            <person name="Hiragaki S."/>
            <person name="Tufail M."/>
            <person name="Shao Q.-M."/>
            <person name="Takeda M."/>
        </authorList>
    </citation>
    <scope>NUCLEOTIDE SEQUENCE [MRNA]</scope>
    <scope>TISSUE SPECIFICITY</scope>
    <source>
        <tissue evidence="7">Head</tissue>
    </source>
</reference>
<gene>
    <name evidence="7" type="primary">PDH</name>
</gene>
<organism>
    <name type="scientific">Armadillidium vulgare</name>
    <name type="common">Pillbug</name>
    <name type="synonym">Pill woodlouse</name>
    <dbReference type="NCBI Taxonomy" id="13347"/>
    <lineage>
        <taxon>Eukaryota</taxon>
        <taxon>Metazoa</taxon>
        <taxon>Ecdysozoa</taxon>
        <taxon>Arthropoda</taxon>
        <taxon>Crustacea</taxon>
        <taxon>Multicrustacea</taxon>
        <taxon>Malacostraca</taxon>
        <taxon>Eumalacostraca</taxon>
        <taxon>Peracarida</taxon>
        <taxon>Isopoda</taxon>
        <taxon>Oniscidea</taxon>
        <taxon>Crinocheta</taxon>
        <taxon>Armadillidiidae</taxon>
        <taxon>Armadillidium</taxon>
    </lineage>
</organism>